<feature type="chain" id="PRO_0000222923" description="Putative diacyglycerol O-acyltransferase Rv3740c">
    <location>
        <begin position="1"/>
        <end position="448"/>
    </location>
</feature>
<feature type="active site" description="Proton acceptor" evidence="1">
    <location>
        <position position="136"/>
    </location>
</feature>
<name>Y3740_MYCTU</name>
<proteinExistence type="evidence at protein level"/>
<organism>
    <name type="scientific">Mycobacterium tuberculosis (strain ATCC 25618 / H37Rv)</name>
    <dbReference type="NCBI Taxonomy" id="83332"/>
    <lineage>
        <taxon>Bacteria</taxon>
        <taxon>Bacillati</taxon>
        <taxon>Actinomycetota</taxon>
        <taxon>Actinomycetes</taxon>
        <taxon>Mycobacteriales</taxon>
        <taxon>Mycobacteriaceae</taxon>
        <taxon>Mycobacterium</taxon>
        <taxon>Mycobacterium tuberculosis complex</taxon>
    </lineage>
</organism>
<gene>
    <name type="ordered locus">Rv3740c</name>
    <name type="ORF">MTV025.088c</name>
</gene>
<comment type="function">
    <text evidence="2">Upon expression in E.coli has a weak triacylglycerol synthase function, making triacylglycerol (TG) from diolein and long-chain fatty acyl-CoA. Also functions weakly as a wax synthase, as it incorporates palmityl alcohol into wax esters in the presence of palmitoyl-CoA.</text>
</comment>
<comment type="catalytic activity">
    <reaction evidence="2">
        <text>an acyl-CoA + a 1,2-diacyl-sn-glycerol = a triacyl-sn-glycerol + CoA</text>
        <dbReference type="Rhea" id="RHEA:10868"/>
        <dbReference type="ChEBI" id="CHEBI:17815"/>
        <dbReference type="ChEBI" id="CHEBI:57287"/>
        <dbReference type="ChEBI" id="CHEBI:58342"/>
        <dbReference type="ChEBI" id="CHEBI:64615"/>
        <dbReference type="EC" id="2.3.1.20"/>
    </reaction>
</comment>
<comment type="catalytic activity">
    <reaction evidence="2">
        <text>di-(9Z)-octadecenoylglycerol + (9Z)-octadecenoyl-CoA = 1,2,3-tri-(9Z-octadecenoyl)-glycerol + CoA</text>
        <dbReference type="Rhea" id="RHEA:45780"/>
        <dbReference type="ChEBI" id="CHEBI:53753"/>
        <dbReference type="ChEBI" id="CHEBI:57287"/>
        <dbReference type="ChEBI" id="CHEBI:57387"/>
        <dbReference type="ChEBI" id="CHEBI:75945"/>
    </reaction>
    <physiologicalReaction direction="left-to-right" evidence="2">
        <dbReference type="Rhea" id="RHEA:45781"/>
    </physiologicalReaction>
</comment>
<comment type="catalytic activity">
    <reaction evidence="2">
        <text>hexadecan-1-ol + hexadecanoyl-CoA = hexadecanyl hexadecanoate + CoA</text>
        <dbReference type="Rhea" id="RHEA:38167"/>
        <dbReference type="ChEBI" id="CHEBI:16125"/>
        <dbReference type="ChEBI" id="CHEBI:57287"/>
        <dbReference type="ChEBI" id="CHEBI:57379"/>
        <dbReference type="ChEBI" id="CHEBI:75584"/>
    </reaction>
    <physiologicalReaction direction="left-to-right" evidence="2">
        <dbReference type="Rhea" id="RHEA:38168"/>
    </physiologicalReaction>
</comment>
<comment type="pathway">
    <text>Glycerolipid metabolism; triacylglycerol biosynthesis.</text>
</comment>
<comment type="induction">
    <text evidence="2">A possible member of the dormancy regulon. Induced in response to reduced oxygen tension (hypoxia) and low levels of nitric oxide (NO). It is hoped that this regulon will give insight into the latent, or dormant phase of infection.</text>
</comment>
<comment type="miscellaneous">
    <text>Was identified as a high-confidence drug target.</text>
</comment>
<comment type="similarity">
    <text evidence="3">Belongs to the long-chain O-acyltransferase family.</text>
</comment>
<evidence type="ECO:0000255" key="1"/>
<evidence type="ECO:0000269" key="2">
    <source>
    </source>
</evidence>
<evidence type="ECO:0000305" key="3"/>
<sequence>MSPIDALFLSAESREHPLHVGALQLFEPPAGAGRGFVRETYQAMLQCREIAPLFRKRPTSLHGALINLGWSTDADVDLGYHARRSALPAPGRVRELLELTSRLHSNLLDRHRPLWETHVIEGLRDGRFAIYSKMHHALVDGVSGLTLMRQPMTTDPIEGKLRTAWSPATQHTAIKRRRGRLQQLGGMLGSVAGLAPSTLRLARSALIEQQLTLPFGAPHTMLNVAVGGARRCAAQSWPLDRVKAVKDAAGVSLNDVVLAMCAGALREYLDDNDALPDTPLVAMVPVSLRTDRDSVGGNMVGAVLCNLATHLDDPADRLNAIHASMRGNKNVLSQLPRAQALAVSLLLLSPAALNTLPGLAKATPPPFNVCISNVPGAREPLYFNGARMVGNYPMSLVLDGQALNITLTSTADSLDFGVVGCRRSVPHVQRVLSHLETSLKELERAVGL</sequence>
<keyword id="KW-0012">Acyltransferase</keyword>
<keyword id="KW-0319">Glycerol metabolism</keyword>
<keyword id="KW-0444">Lipid biosynthesis</keyword>
<keyword id="KW-0443">Lipid metabolism</keyword>
<keyword id="KW-1185">Reference proteome</keyword>
<keyword id="KW-0808">Transferase</keyword>
<accession>P9WKA5</accession>
<accession>L0TF41</accession>
<accession>O69707</accession>
<dbReference type="EC" id="2.3.1.20" evidence="2"/>
<dbReference type="EMBL" id="AL123456">
    <property type="protein sequence ID" value="CCP46567.1"/>
    <property type="molecule type" value="Genomic_DNA"/>
</dbReference>
<dbReference type="PIR" id="E70798">
    <property type="entry name" value="E70798"/>
</dbReference>
<dbReference type="RefSeq" id="NP_218257.1">
    <property type="nucleotide sequence ID" value="NC_000962.3"/>
</dbReference>
<dbReference type="RefSeq" id="WP_003900746.1">
    <property type="nucleotide sequence ID" value="NZ_NVQJ01000009.1"/>
</dbReference>
<dbReference type="SMR" id="P9WKA5"/>
<dbReference type="STRING" id="83332.Rv3740c"/>
<dbReference type="SwissLipids" id="SLP:000001152"/>
<dbReference type="PaxDb" id="83332-Rv3740c"/>
<dbReference type="DNASU" id="885781"/>
<dbReference type="GeneID" id="885781"/>
<dbReference type="KEGG" id="mtu:Rv3740c"/>
<dbReference type="KEGG" id="mtv:RVBD_3740c"/>
<dbReference type="PATRIC" id="fig|83332.111.peg.4161"/>
<dbReference type="TubercuList" id="Rv3740c"/>
<dbReference type="eggNOG" id="COG1020">
    <property type="taxonomic scope" value="Bacteria"/>
</dbReference>
<dbReference type="InParanoid" id="P9WKA5"/>
<dbReference type="OrthoDB" id="9810950at2"/>
<dbReference type="PhylomeDB" id="P9WKA5"/>
<dbReference type="UniPathway" id="UPA00282"/>
<dbReference type="Proteomes" id="UP000001584">
    <property type="component" value="Chromosome"/>
</dbReference>
<dbReference type="GO" id="GO:0005886">
    <property type="term" value="C:plasma membrane"/>
    <property type="evidence" value="ECO:0000318"/>
    <property type="project" value="GO_Central"/>
</dbReference>
<dbReference type="GO" id="GO:0004144">
    <property type="term" value="F:diacylglycerol O-acyltransferase activity"/>
    <property type="evidence" value="ECO:0007669"/>
    <property type="project" value="UniProtKB-EC"/>
</dbReference>
<dbReference type="GO" id="GO:0047196">
    <property type="term" value="F:long-chain-alcohol O-fatty-acyltransferase activity"/>
    <property type="evidence" value="ECO:0000314"/>
    <property type="project" value="MTBBASE"/>
</dbReference>
<dbReference type="GO" id="GO:0008374">
    <property type="term" value="F:O-acyltransferase activity"/>
    <property type="evidence" value="ECO:0000318"/>
    <property type="project" value="GO_Central"/>
</dbReference>
<dbReference type="GO" id="GO:0051701">
    <property type="term" value="P:biological process involved in interaction with host"/>
    <property type="evidence" value="ECO:0000318"/>
    <property type="project" value="GO_Central"/>
</dbReference>
<dbReference type="GO" id="GO:0006071">
    <property type="term" value="P:glycerol metabolic process"/>
    <property type="evidence" value="ECO:0007669"/>
    <property type="project" value="UniProtKB-KW"/>
</dbReference>
<dbReference type="GO" id="GO:0001666">
    <property type="term" value="P:response to hypoxia"/>
    <property type="evidence" value="ECO:0000318"/>
    <property type="project" value="GO_Central"/>
</dbReference>
<dbReference type="GO" id="GO:0071731">
    <property type="term" value="P:response to nitric oxide"/>
    <property type="evidence" value="ECO:0000318"/>
    <property type="project" value="GO_Central"/>
</dbReference>
<dbReference type="GO" id="GO:0019432">
    <property type="term" value="P:triglyceride biosynthetic process"/>
    <property type="evidence" value="ECO:0000318"/>
    <property type="project" value="GO_Central"/>
</dbReference>
<dbReference type="GO" id="GO:0010025">
    <property type="term" value="P:wax biosynthetic process"/>
    <property type="evidence" value="ECO:0000314"/>
    <property type="project" value="MTBBASE"/>
</dbReference>
<dbReference type="InterPro" id="IPR014292">
    <property type="entry name" value="Acyl_transf_WS/DGAT"/>
</dbReference>
<dbReference type="InterPro" id="IPR045034">
    <property type="entry name" value="O-acyltransferase_WSD1-like"/>
</dbReference>
<dbReference type="InterPro" id="IPR009721">
    <property type="entry name" value="O-acyltransferase_WSD1_C"/>
</dbReference>
<dbReference type="InterPro" id="IPR004255">
    <property type="entry name" value="O-acyltransferase_WSD1_N"/>
</dbReference>
<dbReference type="NCBIfam" id="TIGR02946">
    <property type="entry name" value="acyl_WS_DGAT"/>
    <property type="match status" value="1"/>
</dbReference>
<dbReference type="PANTHER" id="PTHR31650">
    <property type="entry name" value="O-ACYLTRANSFERASE (WSD1-LIKE) FAMILY PROTEIN"/>
    <property type="match status" value="1"/>
</dbReference>
<dbReference type="PANTHER" id="PTHR31650:SF1">
    <property type="entry name" value="WAX ESTER SYNTHASE_DIACYLGLYCEROL ACYLTRANSFERASE 4-RELATED"/>
    <property type="match status" value="1"/>
</dbReference>
<dbReference type="Pfam" id="PF06974">
    <property type="entry name" value="WS_DGAT_C"/>
    <property type="match status" value="1"/>
</dbReference>
<dbReference type="Pfam" id="PF03007">
    <property type="entry name" value="WS_DGAT_cat"/>
    <property type="match status" value="1"/>
</dbReference>
<dbReference type="SUPFAM" id="SSF52777">
    <property type="entry name" value="CoA-dependent acyltransferases"/>
    <property type="match status" value="2"/>
</dbReference>
<protein>
    <recommendedName>
        <fullName>Putative diacyglycerol O-acyltransferase Rv3740c</fullName>
        <ecNumber evidence="2">2.3.1.20</ecNumber>
    </recommendedName>
    <alternativeName>
        <fullName>Putative triacylglycerol synthase Rv3740c</fullName>
    </alternativeName>
</protein>
<reference key="1">
    <citation type="journal article" date="1998" name="Nature">
        <title>Deciphering the biology of Mycobacterium tuberculosis from the complete genome sequence.</title>
        <authorList>
            <person name="Cole S.T."/>
            <person name="Brosch R."/>
            <person name="Parkhill J."/>
            <person name="Garnier T."/>
            <person name="Churcher C.M."/>
            <person name="Harris D.E."/>
            <person name="Gordon S.V."/>
            <person name="Eiglmeier K."/>
            <person name="Gas S."/>
            <person name="Barry C.E. III"/>
            <person name="Tekaia F."/>
            <person name="Badcock K."/>
            <person name="Basham D."/>
            <person name="Brown D."/>
            <person name="Chillingworth T."/>
            <person name="Connor R."/>
            <person name="Davies R.M."/>
            <person name="Devlin K."/>
            <person name="Feltwell T."/>
            <person name="Gentles S."/>
            <person name="Hamlin N."/>
            <person name="Holroyd S."/>
            <person name="Hornsby T."/>
            <person name="Jagels K."/>
            <person name="Krogh A."/>
            <person name="McLean J."/>
            <person name="Moule S."/>
            <person name="Murphy L.D."/>
            <person name="Oliver S."/>
            <person name="Osborne J."/>
            <person name="Quail M.A."/>
            <person name="Rajandream M.A."/>
            <person name="Rogers J."/>
            <person name="Rutter S."/>
            <person name="Seeger K."/>
            <person name="Skelton S."/>
            <person name="Squares S."/>
            <person name="Squares R."/>
            <person name="Sulston J.E."/>
            <person name="Taylor K."/>
            <person name="Whitehead S."/>
            <person name="Barrell B.G."/>
        </authorList>
    </citation>
    <scope>NUCLEOTIDE SEQUENCE [LARGE SCALE GENOMIC DNA]</scope>
    <source>
        <strain>ATCC 25618 / H37Rv</strain>
    </source>
</reference>
<reference key="2">
    <citation type="journal article" date="2004" name="J. Bacteriol.">
        <title>Induction of a novel class of diacylglycerol acyltransferases and triacylglycerol accumulation in Mycobacterium tuberculosis as it goes into a dormancy-like state in culture.</title>
        <authorList>
            <person name="Daniel J."/>
            <person name="Deb C."/>
            <person name="Dubey V.S."/>
            <person name="Sirakova T.D."/>
            <person name="Abomoelak B."/>
            <person name="Morbidoni H.R."/>
            <person name="Kolattukudy P.E."/>
        </authorList>
    </citation>
    <scope>EXPRESSION IN E.COLI</scope>
    <scope>CATALYTIC ACTIVITY</scope>
    <scope>INDUCTION BY HYPOXIA</scope>
    <scope>BY NITRIC OXIDE (NO)</scope>
    <source>
        <strain>ATCC 25618 / H37Rv</strain>
    </source>
</reference>
<reference key="3">
    <citation type="journal article" date="2008" name="BMC Syst. Biol.">
        <title>targetTB: a target identification pipeline for Mycobacterium tuberculosis through an interactome, reactome and genome-scale structural analysis.</title>
        <authorList>
            <person name="Raman K."/>
            <person name="Yeturu K."/>
            <person name="Chandra N."/>
        </authorList>
    </citation>
    <scope>IDENTIFICATION AS A DRUG TARGET [LARGE SCALE ANALYSIS]</scope>
</reference>